<dbReference type="EC" id="4.2.1.10" evidence="1"/>
<dbReference type="EMBL" id="BX571857">
    <property type="protein sequence ID" value="CAG42544.1"/>
    <property type="molecule type" value="Genomic_DNA"/>
</dbReference>
<dbReference type="RefSeq" id="WP_000150012.1">
    <property type="nucleotide sequence ID" value="NC_002953.3"/>
</dbReference>
<dbReference type="SMR" id="Q6GB27"/>
<dbReference type="KEGG" id="sas:SAS0769"/>
<dbReference type="HOGENOM" id="CLU_064444_2_1_9"/>
<dbReference type="UniPathway" id="UPA00053">
    <property type="reaction ID" value="UER00086"/>
</dbReference>
<dbReference type="GO" id="GO:0003855">
    <property type="term" value="F:3-dehydroquinate dehydratase activity"/>
    <property type="evidence" value="ECO:0007669"/>
    <property type="project" value="UniProtKB-UniRule"/>
</dbReference>
<dbReference type="GO" id="GO:0046279">
    <property type="term" value="P:3,4-dihydroxybenzoate biosynthetic process"/>
    <property type="evidence" value="ECO:0007669"/>
    <property type="project" value="TreeGrafter"/>
</dbReference>
<dbReference type="GO" id="GO:0008652">
    <property type="term" value="P:amino acid biosynthetic process"/>
    <property type="evidence" value="ECO:0007669"/>
    <property type="project" value="UniProtKB-KW"/>
</dbReference>
<dbReference type="GO" id="GO:0009073">
    <property type="term" value="P:aromatic amino acid family biosynthetic process"/>
    <property type="evidence" value="ECO:0007669"/>
    <property type="project" value="UniProtKB-KW"/>
</dbReference>
<dbReference type="GO" id="GO:0009423">
    <property type="term" value="P:chorismate biosynthetic process"/>
    <property type="evidence" value="ECO:0007669"/>
    <property type="project" value="UniProtKB-UniRule"/>
</dbReference>
<dbReference type="CDD" id="cd00502">
    <property type="entry name" value="DHQase_I"/>
    <property type="match status" value="1"/>
</dbReference>
<dbReference type="FunFam" id="3.20.20.70:FF:000216">
    <property type="entry name" value="3-dehydroquinate dehydratase"/>
    <property type="match status" value="1"/>
</dbReference>
<dbReference type="Gene3D" id="3.20.20.70">
    <property type="entry name" value="Aldolase class I"/>
    <property type="match status" value="1"/>
</dbReference>
<dbReference type="HAMAP" id="MF_00214">
    <property type="entry name" value="AroD"/>
    <property type="match status" value="1"/>
</dbReference>
<dbReference type="InterPro" id="IPR013785">
    <property type="entry name" value="Aldolase_TIM"/>
</dbReference>
<dbReference type="InterPro" id="IPR001381">
    <property type="entry name" value="DHquinase_I"/>
</dbReference>
<dbReference type="InterPro" id="IPR050146">
    <property type="entry name" value="Type-I_3-dehydroquinase"/>
</dbReference>
<dbReference type="NCBIfam" id="TIGR01093">
    <property type="entry name" value="aroD"/>
    <property type="match status" value="1"/>
</dbReference>
<dbReference type="PANTHER" id="PTHR43699">
    <property type="entry name" value="3-DEHYDROQUINATE DEHYDRATASE"/>
    <property type="match status" value="1"/>
</dbReference>
<dbReference type="PANTHER" id="PTHR43699:SF1">
    <property type="entry name" value="3-DEHYDROQUINATE DEHYDRATASE"/>
    <property type="match status" value="1"/>
</dbReference>
<dbReference type="Pfam" id="PF01487">
    <property type="entry name" value="DHquinase_I"/>
    <property type="match status" value="1"/>
</dbReference>
<dbReference type="SUPFAM" id="SSF51569">
    <property type="entry name" value="Aldolase"/>
    <property type="match status" value="1"/>
</dbReference>
<proteinExistence type="inferred from homology"/>
<gene>
    <name evidence="1" type="primary">aroD</name>
    <name type="ordered locus">SAS0769</name>
</gene>
<comment type="function">
    <text evidence="1">Involved in the third step of the chorismate pathway, which leads to the biosynthesis of aromatic amino acids. Catalyzes the cis-dehydration of 3-dehydroquinate (DHQ) and introduces the first double bond of the aromatic ring to yield 3-dehydroshikimate.</text>
</comment>
<comment type="catalytic activity">
    <reaction evidence="1">
        <text>3-dehydroquinate = 3-dehydroshikimate + H2O</text>
        <dbReference type="Rhea" id="RHEA:21096"/>
        <dbReference type="ChEBI" id="CHEBI:15377"/>
        <dbReference type="ChEBI" id="CHEBI:16630"/>
        <dbReference type="ChEBI" id="CHEBI:32364"/>
        <dbReference type="EC" id="4.2.1.10"/>
    </reaction>
</comment>
<comment type="pathway">
    <text evidence="1">Metabolic intermediate biosynthesis; chorismate biosynthesis; chorismate from D-erythrose 4-phosphate and phosphoenolpyruvate: step 3/7.</text>
</comment>
<comment type="subunit">
    <text evidence="1">Homodimer.</text>
</comment>
<comment type="similarity">
    <text evidence="1">Belongs to the type-I 3-dehydroquinase family.</text>
</comment>
<sequence length="238" mass="26937">MTHVEVVATIAPQLSIEETLIQKINHRIDAIDVLELRIDQIENVTVDQVAEMITKLKVMQDSFKLLVTYRTKLQGGYGQFINDLYLNLISDLANINGIDMIDIEWQADIDIEKHQRIITHLQQYNKEVVISHHNFESTPPLDELQFIFFKMQKFNPEYVKLAVMPHNKNDVLNLLQAMSTFSDTMDCKVVGISMSKLGLISRTAQGVFGGALTYGCIGEPQAPGQIDVTDLKAQVTLY</sequence>
<feature type="chain" id="PRO_0000138812" description="3-dehydroquinate dehydratase">
    <location>
        <begin position="1"/>
        <end position="238"/>
    </location>
</feature>
<feature type="active site" description="Proton donor/acceptor" evidence="1">
    <location>
        <position position="133"/>
    </location>
</feature>
<feature type="active site" description="Schiff-base intermediate with substrate" evidence="1">
    <location>
        <position position="160"/>
    </location>
</feature>
<feature type="binding site" evidence="1">
    <location>
        <begin position="35"/>
        <end position="37"/>
    </location>
    <ligand>
        <name>3-dehydroquinate</name>
        <dbReference type="ChEBI" id="CHEBI:32364"/>
    </ligand>
</feature>
<feature type="binding site" evidence="1">
    <location>
        <position position="70"/>
    </location>
    <ligand>
        <name>3-dehydroquinate</name>
        <dbReference type="ChEBI" id="CHEBI:32364"/>
    </ligand>
</feature>
<feature type="binding site" evidence="1">
    <location>
        <position position="202"/>
    </location>
    <ligand>
        <name>3-dehydroquinate</name>
        <dbReference type="ChEBI" id="CHEBI:32364"/>
    </ligand>
</feature>
<feature type="binding site" evidence="1">
    <location>
        <position position="225"/>
    </location>
    <ligand>
        <name>3-dehydroquinate</name>
        <dbReference type="ChEBI" id="CHEBI:32364"/>
    </ligand>
</feature>
<protein>
    <recommendedName>
        <fullName evidence="1">3-dehydroquinate dehydratase</fullName>
        <shortName evidence="1">3-dehydroquinase</shortName>
        <ecNumber evidence="1">4.2.1.10</ecNumber>
    </recommendedName>
    <alternativeName>
        <fullName evidence="1">Type I DHQase</fullName>
    </alternativeName>
    <alternativeName>
        <fullName evidence="1">Type I dehydroquinase</fullName>
        <shortName evidence="1">DHQ1</shortName>
    </alternativeName>
</protein>
<reference key="1">
    <citation type="journal article" date="2004" name="Proc. Natl. Acad. Sci. U.S.A.">
        <title>Complete genomes of two clinical Staphylococcus aureus strains: evidence for the rapid evolution of virulence and drug resistance.</title>
        <authorList>
            <person name="Holden M.T.G."/>
            <person name="Feil E.J."/>
            <person name="Lindsay J.A."/>
            <person name="Peacock S.J."/>
            <person name="Day N.P.J."/>
            <person name="Enright M.C."/>
            <person name="Foster T.J."/>
            <person name="Moore C.E."/>
            <person name="Hurst L."/>
            <person name="Atkin R."/>
            <person name="Barron A."/>
            <person name="Bason N."/>
            <person name="Bentley S.D."/>
            <person name="Chillingworth C."/>
            <person name="Chillingworth T."/>
            <person name="Churcher C."/>
            <person name="Clark L."/>
            <person name="Corton C."/>
            <person name="Cronin A."/>
            <person name="Doggett J."/>
            <person name="Dowd L."/>
            <person name="Feltwell T."/>
            <person name="Hance Z."/>
            <person name="Harris B."/>
            <person name="Hauser H."/>
            <person name="Holroyd S."/>
            <person name="Jagels K."/>
            <person name="James K.D."/>
            <person name="Lennard N."/>
            <person name="Line A."/>
            <person name="Mayes R."/>
            <person name="Moule S."/>
            <person name="Mungall K."/>
            <person name="Ormond D."/>
            <person name="Quail M.A."/>
            <person name="Rabbinowitsch E."/>
            <person name="Rutherford K.M."/>
            <person name="Sanders M."/>
            <person name="Sharp S."/>
            <person name="Simmonds M."/>
            <person name="Stevens K."/>
            <person name="Whitehead S."/>
            <person name="Barrell B.G."/>
            <person name="Spratt B.G."/>
            <person name="Parkhill J."/>
        </authorList>
    </citation>
    <scope>NUCLEOTIDE SEQUENCE [LARGE SCALE GENOMIC DNA]</scope>
    <source>
        <strain>MSSA476</strain>
    </source>
</reference>
<name>AROD_STAAS</name>
<evidence type="ECO:0000255" key="1">
    <source>
        <dbReference type="HAMAP-Rule" id="MF_00214"/>
    </source>
</evidence>
<organism>
    <name type="scientific">Staphylococcus aureus (strain MSSA476)</name>
    <dbReference type="NCBI Taxonomy" id="282459"/>
    <lineage>
        <taxon>Bacteria</taxon>
        <taxon>Bacillati</taxon>
        <taxon>Bacillota</taxon>
        <taxon>Bacilli</taxon>
        <taxon>Bacillales</taxon>
        <taxon>Staphylococcaceae</taxon>
        <taxon>Staphylococcus</taxon>
    </lineage>
</organism>
<keyword id="KW-0028">Amino-acid biosynthesis</keyword>
<keyword id="KW-0057">Aromatic amino acid biosynthesis</keyword>
<keyword id="KW-0456">Lyase</keyword>
<keyword id="KW-0704">Schiff base</keyword>
<accession>Q6GB27</accession>